<evidence type="ECO:0000250" key="1"/>
<evidence type="ECO:0000305" key="2"/>
<reference key="1">
    <citation type="journal article" date="2004" name="Science">
        <title>The Ashbya gossypii genome as a tool for mapping the ancient Saccharomyces cerevisiae genome.</title>
        <authorList>
            <person name="Dietrich F.S."/>
            <person name="Voegeli S."/>
            <person name="Brachat S."/>
            <person name="Lerch A."/>
            <person name="Gates K."/>
            <person name="Steiner S."/>
            <person name="Mohr C."/>
            <person name="Poehlmann R."/>
            <person name="Luedi P."/>
            <person name="Choi S."/>
            <person name="Wing R.A."/>
            <person name="Flavier A."/>
            <person name="Gaffney T.D."/>
            <person name="Philippsen P."/>
        </authorList>
    </citation>
    <scope>NUCLEOTIDE SEQUENCE [LARGE SCALE GENOMIC DNA]</scope>
    <source>
        <strain>ATCC 10895 / CBS 109.51 / FGSC 9923 / NRRL Y-1056</strain>
    </source>
</reference>
<reference key="2">
    <citation type="journal article" date="2013" name="G3 (Bethesda)">
        <title>Genomes of Ashbya fungi isolated from insects reveal four mating-type loci, numerous translocations, lack of transposons, and distinct gene duplications.</title>
        <authorList>
            <person name="Dietrich F.S."/>
            <person name="Voegeli S."/>
            <person name="Kuo S."/>
            <person name="Philippsen P."/>
        </authorList>
    </citation>
    <scope>GENOME REANNOTATION</scope>
    <source>
        <strain>ATCC 10895 / CBS 109.51 / FGSC 9923 / NRRL Y-1056</strain>
    </source>
</reference>
<protein>
    <recommendedName>
        <fullName>Ubiquitin-like modifier-activating enzyme ATG7</fullName>
    </recommendedName>
    <alternativeName>
        <fullName>ATG12-activating enzyme E1 ATG7</fullName>
    </alternativeName>
    <alternativeName>
        <fullName>Autophagy-related protein 7</fullName>
    </alternativeName>
</protein>
<gene>
    <name type="primary">ATG7</name>
    <name type="ordered locus">AER298C</name>
</gene>
<comment type="function">
    <text evidence="1">E1-like activating enzyme involved in the 2 ubiquitin-like systems required for cytoplasm to vacuole transport (Cvt) and autophagy. Activates ATG12 for its conjugation with ATG5 and ATG8 for its conjugation with phosphatidylethanolamine. Both systems are needed for the ATG8 association to Cvt vesicles and autophagosomes membranes. Autophagy is essential for maintenance of amino acid levels and protein synthesis under nitrogen starvation. Required for selective autophagic degradation of the nucleus (nucleophagy) as well as for mitophagy which contributes to regulate mitochondrial quantity and quality by eliminating the mitochondria to a basal level to fulfill cellular energy requirements and preventing excess ROS production. Plays a role in the regulation of filamentous growth and chronological longevity (By similarity).</text>
</comment>
<comment type="subunit">
    <text evidence="1">Homodimer.</text>
</comment>
<comment type="subcellular location">
    <subcellularLocation>
        <location evidence="1">Cytoplasm</location>
    </subcellularLocation>
    <subcellularLocation>
        <location evidence="1">Preautophagosomal structure</location>
    </subcellularLocation>
</comment>
<comment type="domain">
    <text evidence="1">The GxGxxG motif is important for the function, possibly through binding with ATP.</text>
</comment>
<comment type="similarity">
    <text evidence="2">Belongs to the ATG7 family.</text>
</comment>
<keyword id="KW-0072">Autophagy</keyword>
<keyword id="KW-0963">Cytoplasm</keyword>
<keyword id="KW-0653">Protein transport</keyword>
<keyword id="KW-1185">Reference proteome</keyword>
<keyword id="KW-0813">Transport</keyword>
<keyword id="KW-0833">Ubl conjugation pathway</keyword>
<proteinExistence type="inferred from homology"/>
<dbReference type="EMBL" id="AE016818">
    <property type="protein sequence ID" value="AAS52979.1"/>
    <property type="molecule type" value="Genomic_DNA"/>
</dbReference>
<dbReference type="RefSeq" id="NP_985155.1">
    <property type="nucleotide sequence ID" value="NM_210509.1"/>
</dbReference>
<dbReference type="SMR" id="Q756G8"/>
<dbReference type="FunCoup" id="Q756G8">
    <property type="interactions" value="787"/>
</dbReference>
<dbReference type="STRING" id="284811.Q756G8"/>
<dbReference type="EnsemblFungi" id="AAS52979">
    <property type="protein sequence ID" value="AAS52979"/>
    <property type="gene ID" value="AGOS_AER298C"/>
</dbReference>
<dbReference type="GeneID" id="4621368"/>
<dbReference type="KEGG" id="ago:AGOS_AER298C"/>
<dbReference type="eggNOG" id="KOG2337">
    <property type="taxonomic scope" value="Eukaryota"/>
</dbReference>
<dbReference type="HOGENOM" id="CLU_012998_2_1_1"/>
<dbReference type="InParanoid" id="Q756G8"/>
<dbReference type="OMA" id="RQIWDAI"/>
<dbReference type="OrthoDB" id="338614at2759"/>
<dbReference type="Proteomes" id="UP000000591">
    <property type="component" value="Chromosome V"/>
</dbReference>
<dbReference type="GO" id="GO:0005737">
    <property type="term" value="C:cytoplasm"/>
    <property type="evidence" value="ECO:0000318"/>
    <property type="project" value="GO_Central"/>
</dbReference>
<dbReference type="GO" id="GO:0005829">
    <property type="term" value="C:cytosol"/>
    <property type="evidence" value="ECO:0007669"/>
    <property type="project" value="EnsemblFungi"/>
</dbReference>
<dbReference type="GO" id="GO:0097632">
    <property type="term" value="C:extrinsic component of phagophore assembly site membrane"/>
    <property type="evidence" value="ECO:0007669"/>
    <property type="project" value="EnsemblFungi"/>
</dbReference>
<dbReference type="GO" id="GO:0000407">
    <property type="term" value="C:phagophore assembly site"/>
    <property type="evidence" value="ECO:0000318"/>
    <property type="project" value="GO_Central"/>
</dbReference>
<dbReference type="GO" id="GO:0019778">
    <property type="term" value="F:Atg12 activating enzyme activity"/>
    <property type="evidence" value="ECO:0000318"/>
    <property type="project" value="GO_Central"/>
</dbReference>
<dbReference type="GO" id="GO:0019779">
    <property type="term" value="F:Atg8 activating enzyme activity"/>
    <property type="evidence" value="ECO:0000318"/>
    <property type="project" value="GO_Central"/>
</dbReference>
<dbReference type="GO" id="GO:0042802">
    <property type="term" value="F:identical protein binding"/>
    <property type="evidence" value="ECO:0007669"/>
    <property type="project" value="EnsemblFungi"/>
</dbReference>
<dbReference type="GO" id="GO:0000045">
    <property type="term" value="P:autophagosome assembly"/>
    <property type="evidence" value="ECO:0000318"/>
    <property type="project" value="GO_Central"/>
</dbReference>
<dbReference type="GO" id="GO:0006995">
    <property type="term" value="P:cellular response to nitrogen starvation"/>
    <property type="evidence" value="ECO:0000318"/>
    <property type="project" value="GO_Central"/>
</dbReference>
<dbReference type="GO" id="GO:0032258">
    <property type="term" value="P:cytoplasm to vacuole targeting by the Cvt pathway"/>
    <property type="evidence" value="ECO:0007669"/>
    <property type="project" value="EnsemblFungi"/>
</dbReference>
<dbReference type="GO" id="GO:0000423">
    <property type="term" value="P:mitophagy"/>
    <property type="evidence" value="ECO:0000318"/>
    <property type="project" value="GO_Central"/>
</dbReference>
<dbReference type="GO" id="GO:0034727">
    <property type="term" value="P:piecemeal microautophagy of the nucleus"/>
    <property type="evidence" value="ECO:0000318"/>
    <property type="project" value="GO_Central"/>
</dbReference>
<dbReference type="GO" id="GO:0032446">
    <property type="term" value="P:protein modification by small protein conjugation"/>
    <property type="evidence" value="ECO:0000318"/>
    <property type="project" value="GO_Central"/>
</dbReference>
<dbReference type="FunFam" id="3.40.50.720:FF:000243">
    <property type="entry name" value="Ubiquitin-like modifier-activating enzyme ATG7"/>
    <property type="match status" value="1"/>
</dbReference>
<dbReference type="Gene3D" id="3.40.50.720">
    <property type="entry name" value="NAD(P)-binding Rossmann-like Domain"/>
    <property type="match status" value="1"/>
</dbReference>
<dbReference type="Gene3D" id="3.40.140.100">
    <property type="entry name" value="Ubiquitin-like modifier-activating enzyme ATG7 C-terminal domain"/>
    <property type="match status" value="1"/>
</dbReference>
<dbReference type="Gene3D" id="3.40.140.70">
    <property type="entry name" value="Ubiquitin-like modifier-activating enzyme ATG7 N-terminal domain"/>
    <property type="match status" value="1"/>
</dbReference>
<dbReference type="InterPro" id="IPR006285">
    <property type="entry name" value="Atg7"/>
</dbReference>
<dbReference type="InterPro" id="IPR032197">
    <property type="entry name" value="Atg7_N"/>
</dbReference>
<dbReference type="InterPro" id="IPR042522">
    <property type="entry name" value="Atg7_N_1"/>
</dbReference>
<dbReference type="InterPro" id="IPR042523">
    <property type="entry name" value="Atg7_N_2"/>
</dbReference>
<dbReference type="InterPro" id="IPR045886">
    <property type="entry name" value="ThiF/MoeB/HesA"/>
</dbReference>
<dbReference type="InterPro" id="IPR000594">
    <property type="entry name" value="ThiF_NAD_FAD-bd"/>
</dbReference>
<dbReference type="InterPro" id="IPR035985">
    <property type="entry name" value="Ubiquitin-activating_enz"/>
</dbReference>
<dbReference type="NCBIfam" id="TIGR01381">
    <property type="entry name" value="E1_like_apg7"/>
    <property type="match status" value="1"/>
</dbReference>
<dbReference type="PANTHER" id="PTHR10953">
    <property type="entry name" value="UBIQUITIN-ACTIVATING ENZYME E1"/>
    <property type="match status" value="1"/>
</dbReference>
<dbReference type="PANTHER" id="PTHR10953:SF3">
    <property type="entry name" value="UBIQUITIN-LIKE MODIFIER-ACTIVATING ENZYME ATG7"/>
    <property type="match status" value="1"/>
</dbReference>
<dbReference type="Pfam" id="PF16420">
    <property type="entry name" value="ATG7_N"/>
    <property type="match status" value="1"/>
</dbReference>
<dbReference type="Pfam" id="PF00899">
    <property type="entry name" value="ThiF"/>
    <property type="match status" value="1"/>
</dbReference>
<dbReference type="SUPFAM" id="SSF69572">
    <property type="entry name" value="Activating enzymes of the ubiquitin-like proteins"/>
    <property type="match status" value="1"/>
</dbReference>
<accession>Q756G8</accession>
<sequence>MSQSLKFAPPFQSFVDASFFQVFSRLKLDVLRLDSHELPLHAKVDLAGLARGSSISHVFLDSQSFDEATASLPGISLRGSFFNFNTLEEFKRLDKGRFLSEQAQLLWEAGVNGYLDEAAGFFVICFADLKKYRFYYWFATPCFQPETLELKVVKREALTEIDKFSNFIEQNKILCGVLNEETGEVIRASRHELERYSTLVVRDTSNIEHCPTSLVKNFVAVWRHHNPNRSECRVLLLRETCSFSLELSVTGDAMSTSQLKASGWERNVRGLLTPKISELGAIIDPTKLAEQSIDLNLKLMKWRLVPDINLDIVKNCKVLLLGAGTLGCYVARSLLAWGVRKITFVDNGSVSYSNPVRQPLFNFTDCGQPKATSAAAAMKAIFPLVDATGFQLEVPMIGHPLTDEARQKKDYEELRQLIRDHDIVFLLMDSRETRWLPTILGNLESKLVINAALGFDSYLVMRHGNYEQPESSRLGCYFCHDVVAPSDSLTDRTLDEMCTVTRPGVALIAAAYATELAVSVLQHPQGNNAPETSESVLGSVPHQLRGFLPQLSTVKLRTPAYKHCSACSSVIVDAVRENGWEFLREALVDHRIVERLSGLAQVQQETETFLATMEISDDDCFDEIS</sequence>
<name>ATG7_EREGS</name>
<feature type="chain" id="PRO_0000212810" description="Ubiquitin-like modifier-activating enzyme ATG7">
    <location>
        <begin position="1"/>
        <end position="625"/>
    </location>
</feature>
<feature type="short sequence motif" description="GXGXXG motif">
    <location>
        <begin position="322"/>
        <end position="327"/>
    </location>
</feature>
<feature type="active site" description="Glycyl thioester intermediate" evidence="1">
    <location>
        <position position="498"/>
    </location>
</feature>
<organism>
    <name type="scientific">Eremothecium gossypii (strain ATCC 10895 / CBS 109.51 / FGSC 9923 / NRRL Y-1056)</name>
    <name type="common">Yeast</name>
    <name type="synonym">Ashbya gossypii</name>
    <dbReference type="NCBI Taxonomy" id="284811"/>
    <lineage>
        <taxon>Eukaryota</taxon>
        <taxon>Fungi</taxon>
        <taxon>Dikarya</taxon>
        <taxon>Ascomycota</taxon>
        <taxon>Saccharomycotina</taxon>
        <taxon>Saccharomycetes</taxon>
        <taxon>Saccharomycetales</taxon>
        <taxon>Saccharomycetaceae</taxon>
        <taxon>Eremothecium</taxon>
    </lineage>
</organism>